<reference key="1">
    <citation type="journal article" date="2002" name="Proc. Natl. Acad. Sci. U.S.A.">
        <title>Genome sequence and comparative microarray analysis of serotype M18 group A Streptococcus strains associated with acute rheumatic fever outbreaks.</title>
        <authorList>
            <person name="Smoot J.C."/>
            <person name="Barbian K.D."/>
            <person name="Van Gompel J.J."/>
            <person name="Smoot L.M."/>
            <person name="Chaussee M.S."/>
            <person name="Sylva G.L."/>
            <person name="Sturdevant D.E."/>
            <person name="Ricklefs S.M."/>
            <person name="Porcella S.F."/>
            <person name="Parkins L.D."/>
            <person name="Beres S.B."/>
            <person name="Campbell D.S."/>
            <person name="Smith T.M."/>
            <person name="Zhang Q."/>
            <person name="Kapur V."/>
            <person name="Daly J.A."/>
            <person name="Veasy L.G."/>
            <person name="Musser J.M."/>
        </authorList>
    </citation>
    <scope>NUCLEOTIDE SEQUENCE [LARGE SCALE GENOMIC DNA]</scope>
    <source>
        <strain>MGAS8232</strain>
    </source>
</reference>
<evidence type="ECO:0000255" key="1">
    <source>
        <dbReference type="HAMAP-Rule" id="MF_00105"/>
    </source>
</evidence>
<evidence type="ECO:0000305" key="2"/>
<name>GREA_STRP8</name>
<accession>P64287</accession>
<accession>Q8K8J3</accession>
<accession>Q9A1C4</accession>
<proteinExistence type="inferred from homology"/>
<keyword id="KW-0175">Coiled coil</keyword>
<keyword id="KW-0238">DNA-binding</keyword>
<keyword id="KW-0804">Transcription</keyword>
<keyword id="KW-0805">Transcription regulation</keyword>
<feature type="chain" id="PRO_0000176984" description="Transcription elongation factor GreA">
    <location>
        <begin position="1"/>
        <end position="160"/>
    </location>
</feature>
<feature type="coiled-coil region" evidence="1">
    <location>
        <begin position="1"/>
        <end position="71"/>
    </location>
</feature>
<protein>
    <recommendedName>
        <fullName evidence="1">Transcription elongation factor GreA</fullName>
    </recommendedName>
    <alternativeName>
        <fullName evidence="1">Transcript cleavage factor GreA</fullName>
    </alternativeName>
</protein>
<sequence length="160" mass="17653">MAEKTYPMTLTEKEQLEKELEELKLVRRPEIVERIKIARSYGDLSENSEYDAAKDEQAFVEGQISTLETKIRYAEIIDSDAVAKDEVAIGKTVIVQEVGTTDKDTYHIVGAAGADIFSGKISNESPIAQALIGKKTGDKVRIESPAATYDVEIISVEKTN</sequence>
<organism>
    <name type="scientific">Streptococcus pyogenes serotype M18 (strain MGAS8232)</name>
    <dbReference type="NCBI Taxonomy" id="186103"/>
    <lineage>
        <taxon>Bacteria</taxon>
        <taxon>Bacillati</taxon>
        <taxon>Bacillota</taxon>
        <taxon>Bacilli</taxon>
        <taxon>Lactobacillales</taxon>
        <taxon>Streptococcaceae</taxon>
        <taxon>Streptococcus</taxon>
    </lineage>
</organism>
<dbReference type="EMBL" id="AE009949">
    <property type="protein sequence ID" value="AAL97147.1"/>
    <property type="status" value="ALT_INIT"/>
    <property type="molecule type" value="Genomic_DNA"/>
</dbReference>
<dbReference type="RefSeq" id="WP_002990993.1">
    <property type="nucleotide sequence ID" value="NC_003485.1"/>
</dbReference>
<dbReference type="SMR" id="P64287"/>
<dbReference type="GeneID" id="69901372"/>
<dbReference type="KEGG" id="spm:spyM18_0402"/>
<dbReference type="HOGENOM" id="CLU_101379_2_1_9"/>
<dbReference type="GO" id="GO:0003677">
    <property type="term" value="F:DNA binding"/>
    <property type="evidence" value="ECO:0007669"/>
    <property type="project" value="UniProtKB-UniRule"/>
</dbReference>
<dbReference type="GO" id="GO:0070063">
    <property type="term" value="F:RNA polymerase binding"/>
    <property type="evidence" value="ECO:0007669"/>
    <property type="project" value="InterPro"/>
</dbReference>
<dbReference type="GO" id="GO:0006354">
    <property type="term" value="P:DNA-templated transcription elongation"/>
    <property type="evidence" value="ECO:0007669"/>
    <property type="project" value="TreeGrafter"/>
</dbReference>
<dbReference type="GO" id="GO:0032784">
    <property type="term" value="P:regulation of DNA-templated transcription elongation"/>
    <property type="evidence" value="ECO:0007669"/>
    <property type="project" value="UniProtKB-UniRule"/>
</dbReference>
<dbReference type="FunFam" id="1.10.287.180:FF:000001">
    <property type="entry name" value="Transcription elongation factor GreA"/>
    <property type="match status" value="1"/>
</dbReference>
<dbReference type="FunFam" id="3.10.50.30:FF:000001">
    <property type="entry name" value="Transcription elongation factor GreA"/>
    <property type="match status" value="1"/>
</dbReference>
<dbReference type="Gene3D" id="3.10.50.30">
    <property type="entry name" value="Transcription elongation factor, GreA/GreB, C-terminal domain"/>
    <property type="match status" value="1"/>
</dbReference>
<dbReference type="Gene3D" id="1.10.287.180">
    <property type="entry name" value="Transcription elongation factor, GreA/GreB, N-terminal domain"/>
    <property type="match status" value="1"/>
</dbReference>
<dbReference type="HAMAP" id="MF_00105">
    <property type="entry name" value="GreA_GreB"/>
    <property type="match status" value="1"/>
</dbReference>
<dbReference type="InterPro" id="IPR036953">
    <property type="entry name" value="GreA/GreB_C_sf"/>
</dbReference>
<dbReference type="InterPro" id="IPR018151">
    <property type="entry name" value="TF_GreA/GreB_CS"/>
</dbReference>
<dbReference type="InterPro" id="IPR006359">
    <property type="entry name" value="Tscrpt_elong_fac_GreA"/>
</dbReference>
<dbReference type="InterPro" id="IPR028624">
    <property type="entry name" value="Tscrpt_elong_fac_GreA/B"/>
</dbReference>
<dbReference type="InterPro" id="IPR001437">
    <property type="entry name" value="Tscrpt_elong_fac_GreA/B_C"/>
</dbReference>
<dbReference type="InterPro" id="IPR023459">
    <property type="entry name" value="Tscrpt_elong_fac_GreA/B_fam"/>
</dbReference>
<dbReference type="InterPro" id="IPR022691">
    <property type="entry name" value="Tscrpt_elong_fac_GreA/B_N"/>
</dbReference>
<dbReference type="InterPro" id="IPR036805">
    <property type="entry name" value="Tscrpt_elong_fac_GreA/B_N_sf"/>
</dbReference>
<dbReference type="NCBIfam" id="TIGR01462">
    <property type="entry name" value="greA"/>
    <property type="match status" value="1"/>
</dbReference>
<dbReference type="NCBIfam" id="NF001260">
    <property type="entry name" value="PRK00226.1-1"/>
    <property type="match status" value="1"/>
</dbReference>
<dbReference type="NCBIfam" id="NF001263">
    <property type="entry name" value="PRK00226.1-4"/>
    <property type="match status" value="1"/>
</dbReference>
<dbReference type="PANTHER" id="PTHR30437">
    <property type="entry name" value="TRANSCRIPTION ELONGATION FACTOR GREA"/>
    <property type="match status" value="1"/>
</dbReference>
<dbReference type="PANTHER" id="PTHR30437:SF4">
    <property type="entry name" value="TRANSCRIPTION ELONGATION FACTOR GREA"/>
    <property type="match status" value="1"/>
</dbReference>
<dbReference type="Pfam" id="PF01272">
    <property type="entry name" value="GreA_GreB"/>
    <property type="match status" value="1"/>
</dbReference>
<dbReference type="Pfam" id="PF03449">
    <property type="entry name" value="GreA_GreB_N"/>
    <property type="match status" value="1"/>
</dbReference>
<dbReference type="PIRSF" id="PIRSF006092">
    <property type="entry name" value="GreA_GreB"/>
    <property type="match status" value="1"/>
</dbReference>
<dbReference type="SUPFAM" id="SSF54534">
    <property type="entry name" value="FKBP-like"/>
    <property type="match status" value="1"/>
</dbReference>
<dbReference type="SUPFAM" id="SSF46557">
    <property type="entry name" value="GreA transcript cleavage protein, N-terminal domain"/>
    <property type="match status" value="1"/>
</dbReference>
<dbReference type="PROSITE" id="PS00829">
    <property type="entry name" value="GREAB_1"/>
    <property type="match status" value="1"/>
</dbReference>
<dbReference type="PROSITE" id="PS00830">
    <property type="entry name" value="GREAB_2"/>
    <property type="match status" value="1"/>
</dbReference>
<gene>
    <name evidence="1" type="primary">greA</name>
    <name type="ordered locus">spyM18_0402</name>
</gene>
<comment type="function">
    <text evidence="1">Necessary for efficient RNA polymerase transcription elongation past template-encoded arresting sites. The arresting sites in DNA have the property of trapping a certain fraction of elongating RNA polymerases that pass through, resulting in locked ternary complexes. Cleavage of the nascent transcript by cleavage factors such as GreA or GreB allows the resumption of elongation from the new 3'terminus. GreA releases sequences of 2 to 3 nucleotides.</text>
</comment>
<comment type="similarity">
    <text evidence="1">Belongs to the GreA/GreB family.</text>
</comment>
<comment type="sequence caution" evidence="2">
    <conflict type="erroneous initiation">
        <sequence resource="EMBL-CDS" id="AAL97147"/>
    </conflict>
</comment>